<protein>
    <recommendedName>
        <fullName evidence="1">Aspartate carbamoyltransferase regulatory chain</fullName>
    </recommendedName>
</protein>
<accession>C5BC06</accession>
<name>PYRI_EDWI9</name>
<comment type="function">
    <text evidence="1">Involved in allosteric regulation of aspartate carbamoyltransferase.</text>
</comment>
<comment type="cofactor">
    <cofactor evidence="1">
        <name>Zn(2+)</name>
        <dbReference type="ChEBI" id="CHEBI:29105"/>
    </cofactor>
    <text evidence="1">Binds 1 zinc ion per subunit.</text>
</comment>
<comment type="subunit">
    <text evidence="1">Contains catalytic and regulatory chains.</text>
</comment>
<comment type="similarity">
    <text evidence="1">Belongs to the PyrI family.</text>
</comment>
<keyword id="KW-0479">Metal-binding</keyword>
<keyword id="KW-0665">Pyrimidine biosynthesis</keyword>
<keyword id="KW-0862">Zinc</keyword>
<organism>
    <name type="scientific">Edwardsiella ictaluri (strain 93-146)</name>
    <dbReference type="NCBI Taxonomy" id="634503"/>
    <lineage>
        <taxon>Bacteria</taxon>
        <taxon>Pseudomonadati</taxon>
        <taxon>Pseudomonadota</taxon>
        <taxon>Gammaproteobacteria</taxon>
        <taxon>Enterobacterales</taxon>
        <taxon>Hafniaceae</taxon>
        <taxon>Edwardsiella</taxon>
    </lineage>
</organism>
<evidence type="ECO:0000255" key="1">
    <source>
        <dbReference type="HAMAP-Rule" id="MF_00002"/>
    </source>
</evidence>
<proteinExistence type="inferred from homology"/>
<feature type="chain" id="PRO_1000201612" description="Aspartate carbamoyltransferase regulatory chain">
    <location>
        <begin position="1"/>
        <end position="153"/>
    </location>
</feature>
<feature type="binding site" evidence="1">
    <location>
        <position position="109"/>
    </location>
    <ligand>
        <name>Zn(2+)</name>
        <dbReference type="ChEBI" id="CHEBI:29105"/>
    </ligand>
</feature>
<feature type="binding site" evidence="1">
    <location>
        <position position="114"/>
    </location>
    <ligand>
        <name>Zn(2+)</name>
        <dbReference type="ChEBI" id="CHEBI:29105"/>
    </ligand>
</feature>
<feature type="binding site" evidence="1">
    <location>
        <position position="138"/>
    </location>
    <ligand>
        <name>Zn(2+)</name>
        <dbReference type="ChEBI" id="CHEBI:29105"/>
    </ligand>
</feature>
<feature type="binding site" evidence="1">
    <location>
        <position position="141"/>
    </location>
    <ligand>
        <name>Zn(2+)</name>
        <dbReference type="ChEBI" id="CHEBI:29105"/>
    </ligand>
</feature>
<sequence>MTHDNKLQVEAIKCGTVIDHIPAHVGFKLLTLFKLTETDRRVTIGLNLPSNAQGSKDLIKIEDVFLSEEQVNQLAIYAPRATVNCIENYSVVRKMVPSLPERIDSVLTCPNSNCISRSEPVCSSFSVRARAGEVLLKCKYCEKEFAHHAVMEQ</sequence>
<dbReference type="EMBL" id="CP001600">
    <property type="protein sequence ID" value="ACR70613.1"/>
    <property type="molecule type" value="Genomic_DNA"/>
</dbReference>
<dbReference type="RefSeq" id="WP_015872685.1">
    <property type="nucleotide sequence ID" value="NZ_CP169062.1"/>
</dbReference>
<dbReference type="SMR" id="C5BC06"/>
<dbReference type="STRING" id="67780.B6E78_09020"/>
<dbReference type="GeneID" id="69540325"/>
<dbReference type="KEGG" id="eic:NT01EI_3477"/>
<dbReference type="PATRIC" id="fig|634503.3.peg.3095"/>
<dbReference type="HOGENOM" id="CLU_128576_0_0_6"/>
<dbReference type="OrthoDB" id="5599321at2"/>
<dbReference type="Proteomes" id="UP000001485">
    <property type="component" value="Chromosome"/>
</dbReference>
<dbReference type="GO" id="GO:0009347">
    <property type="term" value="C:aspartate carbamoyltransferase complex"/>
    <property type="evidence" value="ECO:0007669"/>
    <property type="project" value="InterPro"/>
</dbReference>
<dbReference type="GO" id="GO:0046872">
    <property type="term" value="F:metal ion binding"/>
    <property type="evidence" value="ECO:0007669"/>
    <property type="project" value="UniProtKB-KW"/>
</dbReference>
<dbReference type="GO" id="GO:0006207">
    <property type="term" value="P:'de novo' pyrimidine nucleobase biosynthetic process"/>
    <property type="evidence" value="ECO:0007669"/>
    <property type="project" value="InterPro"/>
</dbReference>
<dbReference type="GO" id="GO:0006221">
    <property type="term" value="P:pyrimidine nucleotide biosynthetic process"/>
    <property type="evidence" value="ECO:0007669"/>
    <property type="project" value="UniProtKB-UniRule"/>
</dbReference>
<dbReference type="Gene3D" id="2.30.30.20">
    <property type="entry name" value="Aspartate carbamoyltransferase regulatory subunit, C-terminal domain"/>
    <property type="match status" value="1"/>
</dbReference>
<dbReference type="Gene3D" id="3.30.70.140">
    <property type="entry name" value="Aspartate carbamoyltransferase regulatory subunit, N-terminal domain"/>
    <property type="match status" value="1"/>
</dbReference>
<dbReference type="HAMAP" id="MF_00002">
    <property type="entry name" value="Asp_carb_tr_reg"/>
    <property type="match status" value="1"/>
</dbReference>
<dbReference type="InterPro" id="IPR020545">
    <property type="entry name" value="Asp_carbamoyltransf_reg_N"/>
</dbReference>
<dbReference type="InterPro" id="IPR002801">
    <property type="entry name" value="Asp_carbamoylTrfase_reg"/>
</dbReference>
<dbReference type="InterPro" id="IPR020542">
    <property type="entry name" value="Asp_carbamoyltrfase_reg_C"/>
</dbReference>
<dbReference type="InterPro" id="IPR036792">
    <property type="entry name" value="Asp_carbatrfase_reg_C_sf"/>
</dbReference>
<dbReference type="InterPro" id="IPR036793">
    <property type="entry name" value="Asp_carbatrfase_reg_N_sf"/>
</dbReference>
<dbReference type="NCBIfam" id="TIGR00240">
    <property type="entry name" value="ATCase_reg"/>
    <property type="match status" value="1"/>
</dbReference>
<dbReference type="PANTHER" id="PTHR35805">
    <property type="entry name" value="ASPARTATE CARBAMOYLTRANSFERASE REGULATORY CHAIN"/>
    <property type="match status" value="1"/>
</dbReference>
<dbReference type="PANTHER" id="PTHR35805:SF1">
    <property type="entry name" value="ASPARTATE CARBAMOYLTRANSFERASE REGULATORY CHAIN"/>
    <property type="match status" value="1"/>
</dbReference>
<dbReference type="Pfam" id="PF01948">
    <property type="entry name" value="PyrI"/>
    <property type="match status" value="1"/>
</dbReference>
<dbReference type="Pfam" id="PF02748">
    <property type="entry name" value="PyrI_C"/>
    <property type="match status" value="1"/>
</dbReference>
<dbReference type="SUPFAM" id="SSF57825">
    <property type="entry name" value="Aspartate carbamoyltransferase, Regulatory-chain, C-terminal domain"/>
    <property type="match status" value="1"/>
</dbReference>
<dbReference type="SUPFAM" id="SSF54893">
    <property type="entry name" value="Aspartate carbamoyltransferase, Regulatory-chain, N-terminal domain"/>
    <property type="match status" value="1"/>
</dbReference>
<reference key="1">
    <citation type="submission" date="2009-03" db="EMBL/GenBank/DDBJ databases">
        <title>Complete genome sequence of Edwardsiella ictaluri 93-146.</title>
        <authorList>
            <person name="Williams M.L."/>
            <person name="Gillaspy A.F."/>
            <person name="Dyer D.W."/>
            <person name="Thune R.L."/>
            <person name="Waldbieser G.C."/>
            <person name="Schuster S.C."/>
            <person name="Gipson J."/>
            <person name="Zaitshik J."/>
            <person name="Landry C."/>
            <person name="Lawrence M.L."/>
        </authorList>
    </citation>
    <scope>NUCLEOTIDE SEQUENCE [LARGE SCALE GENOMIC DNA]</scope>
    <source>
        <strain>93-146</strain>
    </source>
</reference>
<gene>
    <name evidence="1" type="primary">pyrI</name>
    <name type="ordered locus">NT01EI_3477</name>
</gene>